<gene>
    <name evidence="1" type="primary">apt</name>
    <name type="ordered locus">MYPU_3220</name>
</gene>
<organism>
    <name type="scientific">Mycoplasmopsis pulmonis (strain UAB CTIP)</name>
    <name type="common">Mycoplasma pulmonis</name>
    <dbReference type="NCBI Taxonomy" id="272635"/>
    <lineage>
        <taxon>Bacteria</taxon>
        <taxon>Bacillati</taxon>
        <taxon>Mycoplasmatota</taxon>
        <taxon>Mycoplasmoidales</taxon>
        <taxon>Metamycoplasmataceae</taxon>
        <taxon>Mycoplasmopsis</taxon>
    </lineage>
</organism>
<reference key="1">
    <citation type="journal article" date="2001" name="Nucleic Acids Res.">
        <title>The complete genome sequence of the murine respiratory pathogen Mycoplasma pulmonis.</title>
        <authorList>
            <person name="Chambaud I."/>
            <person name="Heilig R."/>
            <person name="Ferris S."/>
            <person name="Barbe V."/>
            <person name="Samson D."/>
            <person name="Galisson F."/>
            <person name="Moszer I."/>
            <person name="Dybvig K."/>
            <person name="Wroblewski H."/>
            <person name="Viari A."/>
            <person name="Rocha E.P.C."/>
            <person name="Blanchard A."/>
        </authorList>
    </citation>
    <scope>NUCLEOTIDE SEQUENCE [LARGE SCALE GENOMIC DNA]</scope>
    <source>
        <strain>UAB CTIP</strain>
    </source>
</reference>
<accession>Q98QN9</accession>
<evidence type="ECO:0000255" key="1">
    <source>
        <dbReference type="HAMAP-Rule" id="MF_00004"/>
    </source>
</evidence>
<name>APT_MYCPU</name>
<feature type="chain" id="PRO_0000149418" description="Adenine phosphoribosyltransferase">
    <location>
        <begin position="1"/>
        <end position="170"/>
    </location>
</feature>
<proteinExistence type="inferred from homology"/>
<protein>
    <recommendedName>
        <fullName evidence="1">Adenine phosphoribosyltransferase</fullName>
        <shortName evidence="1">APRT</shortName>
        <ecNumber evidence="1">2.4.2.7</ecNumber>
    </recommendedName>
</protein>
<sequence>MNLEKFIKDVKDFPKQGINFKDISPLLANGQALNYTIKKMAELAKDADIIVGPDARGFLFGTPTAAFLSKPFIMVRKKGKLPGEVIKHEYDLEYGKDILEIQKGVIKPGDKAIIIDDVLATGGTTKAIIDLLESQGAKVIKIILLLELTNLNGRSKFGSLQVESLVKVSV</sequence>
<keyword id="KW-0963">Cytoplasm</keyword>
<keyword id="KW-0328">Glycosyltransferase</keyword>
<keyword id="KW-0660">Purine salvage</keyword>
<keyword id="KW-1185">Reference proteome</keyword>
<keyword id="KW-0808">Transferase</keyword>
<comment type="function">
    <text evidence="1">Catalyzes a salvage reaction resulting in the formation of AMP, that is energically less costly than de novo synthesis.</text>
</comment>
<comment type="catalytic activity">
    <reaction evidence="1">
        <text>AMP + diphosphate = 5-phospho-alpha-D-ribose 1-diphosphate + adenine</text>
        <dbReference type="Rhea" id="RHEA:16609"/>
        <dbReference type="ChEBI" id="CHEBI:16708"/>
        <dbReference type="ChEBI" id="CHEBI:33019"/>
        <dbReference type="ChEBI" id="CHEBI:58017"/>
        <dbReference type="ChEBI" id="CHEBI:456215"/>
        <dbReference type="EC" id="2.4.2.7"/>
    </reaction>
</comment>
<comment type="pathway">
    <text evidence="1">Purine metabolism; AMP biosynthesis via salvage pathway; AMP from adenine: step 1/1.</text>
</comment>
<comment type="subunit">
    <text evidence="1">Homodimer.</text>
</comment>
<comment type="subcellular location">
    <subcellularLocation>
        <location evidence="1">Cytoplasm</location>
    </subcellularLocation>
</comment>
<comment type="similarity">
    <text evidence="1">Belongs to the purine/pyrimidine phosphoribosyltransferase family.</text>
</comment>
<dbReference type="EC" id="2.4.2.7" evidence="1"/>
<dbReference type="EMBL" id="AL445564">
    <property type="protein sequence ID" value="CAC13495.1"/>
    <property type="molecule type" value="Genomic_DNA"/>
</dbReference>
<dbReference type="PIR" id="B99552">
    <property type="entry name" value="B99552"/>
</dbReference>
<dbReference type="RefSeq" id="WP_010925126.1">
    <property type="nucleotide sequence ID" value="NC_002771.1"/>
</dbReference>
<dbReference type="SMR" id="Q98QN9"/>
<dbReference type="STRING" id="272635.gene:17576913"/>
<dbReference type="KEGG" id="mpu:MYPU_3220"/>
<dbReference type="eggNOG" id="COG0503">
    <property type="taxonomic scope" value="Bacteria"/>
</dbReference>
<dbReference type="HOGENOM" id="CLU_063339_3_0_14"/>
<dbReference type="BioCyc" id="MPUL272635:G1GT6-322-MONOMER"/>
<dbReference type="UniPathway" id="UPA00588">
    <property type="reaction ID" value="UER00646"/>
</dbReference>
<dbReference type="Proteomes" id="UP000000528">
    <property type="component" value="Chromosome"/>
</dbReference>
<dbReference type="GO" id="GO:0005737">
    <property type="term" value="C:cytoplasm"/>
    <property type="evidence" value="ECO:0007669"/>
    <property type="project" value="UniProtKB-SubCell"/>
</dbReference>
<dbReference type="GO" id="GO:0002055">
    <property type="term" value="F:adenine binding"/>
    <property type="evidence" value="ECO:0007669"/>
    <property type="project" value="TreeGrafter"/>
</dbReference>
<dbReference type="GO" id="GO:0003999">
    <property type="term" value="F:adenine phosphoribosyltransferase activity"/>
    <property type="evidence" value="ECO:0007669"/>
    <property type="project" value="UniProtKB-UniRule"/>
</dbReference>
<dbReference type="GO" id="GO:0016208">
    <property type="term" value="F:AMP binding"/>
    <property type="evidence" value="ECO:0007669"/>
    <property type="project" value="TreeGrafter"/>
</dbReference>
<dbReference type="GO" id="GO:0006168">
    <property type="term" value="P:adenine salvage"/>
    <property type="evidence" value="ECO:0007669"/>
    <property type="project" value="InterPro"/>
</dbReference>
<dbReference type="GO" id="GO:0044209">
    <property type="term" value="P:AMP salvage"/>
    <property type="evidence" value="ECO:0007669"/>
    <property type="project" value="UniProtKB-UniRule"/>
</dbReference>
<dbReference type="GO" id="GO:0006166">
    <property type="term" value="P:purine ribonucleoside salvage"/>
    <property type="evidence" value="ECO:0007669"/>
    <property type="project" value="UniProtKB-KW"/>
</dbReference>
<dbReference type="CDD" id="cd06223">
    <property type="entry name" value="PRTases_typeI"/>
    <property type="match status" value="1"/>
</dbReference>
<dbReference type="FunFam" id="3.40.50.2020:FF:000004">
    <property type="entry name" value="Adenine phosphoribosyltransferase"/>
    <property type="match status" value="1"/>
</dbReference>
<dbReference type="Gene3D" id="3.40.50.2020">
    <property type="match status" value="1"/>
</dbReference>
<dbReference type="HAMAP" id="MF_00004">
    <property type="entry name" value="Aden_phosphoribosyltr"/>
    <property type="match status" value="1"/>
</dbReference>
<dbReference type="InterPro" id="IPR005764">
    <property type="entry name" value="Ade_phspho_trans"/>
</dbReference>
<dbReference type="InterPro" id="IPR000836">
    <property type="entry name" value="PRibTrfase_dom"/>
</dbReference>
<dbReference type="InterPro" id="IPR029057">
    <property type="entry name" value="PRTase-like"/>
</dbReference>
<dbReference type="InterPro" id="IPR050054">
    <property type="entry name" value="UPRTase/APRTase"/>
</dbReference>
<dbReference type="NCBIfam" id="TIGR01090">
    <property type="entry name" value="apt"/>
    <property type="match status" value="1"/>
</dbReference>
<dbReference type="NCBIfam" id="NF002636">
    <property type="entry name" value="PRK02304.1-5"/>
    <property type="match status" value="1"/>
</dbReference>
<dbReference type="PANTHER" id="PTHR32315">
    <property type="entry name" value="ADENINE PHOSPHORIBOSYLTRANSFERASE"/>
    <property type="match status" value="1"/>
</dbReference>
<dbReference type="PANTHER" id="PTHR32315:SF3">
    <property type="entry name" value="ADENINE PHOSPHORIBOSYLTRANSFERASE"/>
    <property type="match status" value="1"/>
</dbReference>
<dbReference type="Pfam" id="PF00156">
    <property type="entry name" value="Pribosyltran"/>
    <property type="match status" value="1"/>
</dbReference>
<dbReference type="SUPFAM" id="SSF53271">
    <property type="entry name" value="PRTase-like"/>
    <property type="match status" value="1"/>
</dbReference>
<dbReference type="PROSITE" id="PS00103">
    <property type="entry name" value="PUR_PYR_PR_TRANSFER"/>
    <property type="match status" value="1"/>
</dbReference>